<comment type="similarity">
    <text evidence="1">Belongs to the bacterial ribosomal protein bL28 family.</text>
</comment>
<dbReference type="EMBL" id="CP000114">
    <property type="protein sequence ID" value="ABA45686.1"/>
    <property type="molecule type" value="Genomic_DNA"/>
</dbReference>
<dbReference type="RefSeq" id="WP_001140949.1">
    <property type="nucleotide sequence ID" value="NC_007432.1"/>
</dbReference>
<dbReference type="SMR" id="Q3K3Q0"/>
<dbReference type="GeneID" id="66885106"/>
<dbReference type="KEGG" id="sak:SAK_0180"/>
<dbReference type="HOGENOM" id="CLU_064548_7_1_9"/>
<dbReference type="GO" id="GO:1990904">
    <property type="term" value="C:ribonucleoprotein complex"/>
    <property type="evidence" value="ECO:0007669"/>
    <property type="project" value="UniProtKB-KW"/>
</dbReference>
<dbReference type="GO" id="GO:0005840">
    <property type="term" value="C:ribosome"/>
    <property type="evidence" value="ECO:0007669"/>
    <property type="project" value="UniProtKB-KW"/>
</dbReference>
<dbReference type="GO" id="GO:0003735">
    <property type="term" value="F:structural constituent of ribosome"/>
    <property type="evidence" value="ECO:0007669"/>
    <property type="project" value="InterPro"/>
</dbReference>
<dbReference type="GO" id="GO:0006412">
    <property type="term" value="P:translation"/>
    <property type="evidence" value="ECO:0007669"/>
    <property type="project" value="UniProtKB-UniRule"/>
</dbReference>
<dbReference type="Gene3D" id="2.30.170.40">
    <property type="entry name" value="Ribosomal protein L28/L24"/>
    <property type="match status" value="1"/>
</dbReference>
<dbReference type="HAMAP" id="MF_00373">
    <property type="entry name" value="Ribosomal_bL28"/>
    <property type="match status" value="1"/>
</dbReference>
<dbReference type="InterPro" id="IPR050096">
    <property type="entry name" value="Bacterial_rp_bL28"/>
</dbReference>
<dbReference type="InterPro" id="IPR026569">
    <property type="entry name" value="Ribosomal_bL28"/>
</dbReference>
<dbReference type="InterPro" id="IPR034704">
    <property type="entry name" value="Ribosomal_bL28/bL31-like_sf"/>
</dbReference>
<dbReference type="InterPro" id="IPR001383">
    <property type="entry name" value="Ribosomal_bL28_bact-type"/>
</dbReference>
<dbReference type="InterPro" id="IPR037147">
    <property type="entry name" value="Ribosomal_bL28_sf"/>
</dbReference>
<dbReference type="NCBIfam" id="TIGR00009">
    <property type="entry name" value="L28"/>
    <property type="match status" value="1"/>
</dbReference>
<dbReference type="PANTHER" id="PTHR39080">
    <property type="entry name" value="50S RIBOSOMAL PROTEIN L28"/>
    <property type="match status" value="1"/>
</dbReference>
<dbReference type="PANTHER" id="PTHR39080:SF1">
    <property type="entry name" value="LARGE RIBOSOMAL SUBUNIT PROTEIN BL28A"/>
    <property type="match status" value="1"/>
</dbReference>
<dbReference type="Pfam" id="PF00830">
    <property type="entry name" value="Ribosomal_L28"/>
    <property type="match status" value="1"/>
</dbReference>
<dbReference type="SUPFAM" id="SSF143800">
    <property type="entry name" value="L28p-like"/>
    <property type="match status" value="1"/>
</dbReference>
<protein>
    <recommendedName>
        <fullName evidence="1">Large ribosomal subunit protein bL28</fullName>
    </recommendedName>
    <alternativeName>
        <fullName evidence="2">50S ribosomal protein L28</fullName>
    </alternativeName>
</protein>
<evidence type="ECO:0000255" key="1">
    <source>
        <dbReference type="HAMAP-Rule" id="MF_00373"/>
    </source>
</evidence>
<evidence type="ECO:0000305" key="2"/>
<keyword id="KW-0687">Ribonucleoprotein</keyword>
<keyword id="KW-0689">Ribosomal protein</keyword>
<name>RL28_STRA1</name>
<feature type="chain" id="PRO_1000007368" description="Large ribosomal subunit protein bL28">
    <location>
        <begin position="1"/>
        <end position="62"/>
    </location>
</feature>
<proteinExistence type="inferred from homology"/>
<reference key="1">
    <citation type="journal article" date="2005" name="Proc. Natl. Acad. Sci. U.S.A.">
        <title>Genome analysis of multiple pathogenic isolates of Streptococcus agalactiae: implications for the microbial 'pan-genome'.</title>
        <authorList>
            <person name="Tettelin H."/>
            <person name="Masignani V."/>
            <person name="Cieslewicz M.J."/>
            <person name="Donati C."/>
            <person name="Medini D."/>
            <person name="Ward N.L."/>
            <person name="Angiuoli S.V."/>
            <person name="Crabtree J."/>
            <person name="Jones A.L."/>
            <person name="Durkin A.S."/>
            <person name="DeBoy R.T."/>
            <person name="Davidsen T.M."/>
            <person name="Mora M."/>
            <person name="Scarselli M."/>
            <person name="Margarit y Ros I."/>
            <person name="Peterson J.D."/>
            <person name="Hauser C.R."/>
            <person name="Sundaram J.P."/>
            <person name="Nelson W.C."/>
            <person name="Madupu R."/>
            <person name="Brinkac L.M."/>
            <person name="Dodson R.J."/>
            <person name="Rosovitz M.J."/>
            <person name="Sullivan S.A."/>
            <person name="Daugherty S.C."/>
            <person name="Haft D.H."/>
            <person name="Selengut J."/>
            <person name="Gwinn M.L."/>
            <person name="Zhou L."/>
            <person name="Zafar N."/>
            <person name="Khouri H."/>
            <person name="Radune D."/>
            <person name="Dimitrov G."/>
            <person name="Watkins K."/>
            <person name="O'Connor K.J."/>
            <person name="Smith S."/>
            <person name="Utterback T.R."/>
            <person name="White O."/>
            <person name="Rubens C.E."/>
            <person name="Grandi G."/>
            <person name="Madoff L.C."/>
            <person name="Kasper D.L."/>
            <person name="Telford J.L."/>
            <person name="Wessels M.R."/>
            <person name="Rappuoli R."/>
            <person name="Fraser C.M."/>
        </authorList>
    </citation>
    <scope>NUCLEOTIDE SEQUENCE [LARGE SCALE GENOMIC DNA]</scope>
    <source>
        <strain>ATCC 27591 / A909 / CDC SS700</strain>
    </source>
</reference>
<gene>
    <name evidence="1" type="primary">rpmB</name>
    <name type="ordered locus">SAK_0180</name>
</gene>
<accession>Q3K3Q0</accession>
<sequence length="62" mass="6942">MAKVCYFTGRKTVSGNNRSHAMNQTKRTVKPNLQKVTVLIDGKPKKVWVSARALKSGKVERV</sequence>
<organism>
    <name type="scientific">Streptococcus agalactiae serotype Ia (strain ATCC 27591 / A909 / CDC SS700)</name>
    <dbReference type="NCBI Taxonomy" id="205921"/>
    <lineage>
        <taxon>Bacteria</taxon>
        <taxon>Bacillati</taxon>
        <taxon>Bacillota</taxon>
        <taxon>Bacilli</taxon>
        <taxon>Lactobacillales</taxon>
        <taxon>Streptococcaceae</taxon>
        <taxon>Streptococcus</taxon>
    </lineage>
</organism>